<protein>
    <recommendedName>
        <fullName evidence="1">Glycine cleavage system H protein</fullName>
    </recommendedName>
</protein>
<name>GCSH_HERA2</name>
<accession>A9B2Q6</accession>
<keyword id="KW-0450">Lipoyl</keyword>
<evidence type="ECO:0000255" key="1">
    <source>
        <dbReference type="HAMAP-Rule" id="MF_00272"/>
    </source>
</evidence>
<evidence type="ECO:0000255" key="2">
    <source>
        <dbReference type="PROSITE-ProRule" id="PRU01066"/>
    </source>
</evidence>
<gene>
    <name evidence="1" type="primary">gcvH</name>
    <name type="ordered locus">Haur_2869</name>
</gene>
<comment type="function">
    <text evidence="1">The glycine cleavage system catalyzes the degradation of glycine. The H protein shuttles the methylamine group of glycine from the P protein to the T protein.</text>
</comment>
<comment type="cofactor">
    <cofactor evidence="1">
        <name>(R)-lipoate</name>
        <dbReference type="ChEBI" id="CHEBI:83088"/>
    </cofactor>
    <text evidence="1">Binds 1 lipoyl cofactor covalently.</text>
</comment>
<comment type="subunit">
    <text evidence="1">The glycine cleavage system is composed of four proteins: P, T, L and H.</text>
</comment>
<comment type="similarity">
    <text evidence="1">Belongs to the GcvH family.</text>
</comment>
<proteinExistence type="inferred from homology"/>
<feature type="chain" id="PRO_1000114522" description="Glycine cleavage system H protein">
    <location>
        <begin position="1"/>
        <end position="129"/>
    </location>
</feature>
<feature type="domain" description="Lipoyl-binding" evidence="2">
    <location>
        <begin position="23"/>
        <end position="105"/>
    </location>
</feature>
<feature type="modified residue" description="N6-lipoyllysine" evidence="1">
    <location>
        <position position="64"/>
    </location>
</feature>
<sequence length="129" mass="14217">MSNVPHELLYTKEHEWVRIDGNSAVVGITEHAQRELGDVVFVELPDVGKSFEVGEPFGTVESVKAVSEIYAPLSGEITEINNEVVDSPELVNEDPYGEGWLAKFSFTTAPSGLLSAAEYERYINDEANK</sequence>
<dbReference type="EMBL" id="CP000875">
    <property type="protein sequence ID" value="ABX05507.1"/>
    <property type="molecule type" value="Genomic_DNA"/>
</dbReference>
<dbReference type="SMR" id="A9B2Q6"/>
<dbReference type="FunCoup" id="A9B2Q6">
    <property type="interactions" value="459"/>
</dbReference>
<dbReference type="STRING" id="316274.Haur_2869"/>
<dbReference type="KEGG" id="hau:Haur_2869"/>
<dbReference type="eggNOG" id="COG0509">
    <property type="taxonomic scope" value="Bacteria"/>
</dbReference>
<dbReference type="HOGENOM" id="CLU_097408_2_0_0"/>
<dbReference type="InParanoid" id="A9B2Q6"/>
<dbReference type="Proteomes" id="UP000000787">
    <property type="component" value="Chromosome"/>
</dbReference>
<dbReference type="GO" id="GO:0005829">
    <property type="term" value="C:cytosol"/>
    <property type="evidence" value="ECO:0007669"/>
    <property type="project" value="TreeGrafter"/>
</dbReference>
<dbReference type="GO" id="GO:0005960">
    <property type="term" value="C:glycine cleavage complex"/>
    <property type="evidence" value="ECO:0007669"/>
    <property type="project" value="InterPro"/>
</dbReference>
<dbReference type="GO" id="GO:0019464">
    <property type="term" value="P:glycine decarboxylation via glycine cleavage system"/>
    <property type="evidence" value="ECO:0007669"/>
    <property type="project" value="UniProtKB-UniRule"/>
</dbReference>
<dbReference type="CDD" id="cd06848">
    <property type="entry name" value="GCS_H"/>
    <property type="match status" value="1"/>
</dbReference>
<dbReference type="Gene3D" id="2.40.50.100">
    <property type="match status" value="1"/>
</dbReference>
<dbReference type="HAMAP" id="MF_00272">
    <property type="entry name" value="GcvH"/>
    <property type="match status" value="1"/>
</dbReference>
<dbReference type="InterPro" id="IPR003016">
    <property type="entry name" value="2-oxoA_DH_lipoyl-BS"/>
</dbReference>
<dbReference type="InterPro" id="IPR000089">
    <property type="entry name" value="Biotin_lipoyl"/>
</dbReference>
<dbReference type="InterPro" id="IPR002930">
    <property type="entry name" value="GCV_H"/>
</dbReference>
<dbReference type="InterPro" id="IPR033753">
    <property type="entry name" value="GCV_H/Fam206"/>
</dbReference>
<dbReference type="InterPro" id="IPR017453">
    <property type="entry name" value="GCV_H_sub"/>
</dbReference>
<dbReference type="InterPro" id="IPR011053">
    <property type="entry name" value="Single_hybrid_motif"/>
</dbReference>
<dbReference type="NCBIfam" id="TIGR00527">
    <property type="entry name" value="gcvH"/>
    <property type="match status" value="1"/>
</dbReference>
<dbReference type="NCBIfam" id="NF002270">
    <property type="entry name" value="PRK01202.1"/>
    <property type="match status" value="1"/>
</dbReference>
<dbReference type="PANTHER" id="PTHR11715">
    <property type="entry name" value="GLYCINE CLEAVAGE SYSTEM H PROTEIN"/>
    <property type="match status" value="1"/>
</dbReference>
<dbReference type="PANTHER" id="PTHR11715:SF3">
    <property type="entry name" value="GLYCINE CLEAVAGE SYSTEM H PROTEIN-RELATED"/>
    <property type="match status" value="1"/>
</dbReference>
<dbReference type="Pfam" id="PF01597">
    <property type="entry name" value="GCV_H"/>
    <property type="match status" value="1"/>
</dbReference>
<dbReference type="SUPFAM" id="SSF51230">
    <property type="entry name" value="Single hybrid motif"/>
    <property type="match status" value="1"/>
</dbReference>
<dbReference type="PROSITE" id="PS50968">
    <property type="entry name" value="BIOTINYL_LIPOYL"/>
    <property type="match status" value="1"/>
</dbReference>
<dbReference type="PROSITE" id="PS00189">
    <property type="entry name" value="LIPOYL"/>
    <property type="match status" value="1"/>
</dbReference>
<organism>
    <name type="scientific">Herpetosiphon aurantiacus (strain ATCC 23779 / DSM 785 / 114-95)</name>
    <dbReference type="NCBI Taxonomy" id="316274"/>
    <lineage>
        <taxon>Bacteria</taxon>
        <taxon>Bacillati</taxon>
        <taxon>Chloroflexota</taxon>
        <taxon>Chloroflexia</taxon>
        <taxon>Herpetosiphonales</taxon>
        <taxon>Herpetosiphonaceae</taxon>
        <taxon>Herpetosiphon</taxon>
    </lineage>
</organism>
<reference key="1">
    <citation type="journal article" date="2011" name="Stand. Genomic Sci.">
        <title>Complete genome sequence of the filamentous gliding predatory bacterium Herpetosiphon aurantiacus type strain (114-95(T)).</title>
        <authorList>
            <person name="Kiss H."/>
            <person name="Nett M."/>
            <person name="Domin N."/>
            <person name="Martin K."/>
            <person name="Maresca J.A."/>
            <person name="Copeland A."/>
            <person name="Lapidus A."/>
            <person name="Lucas S."/>
            <person name="Berry K.W."/>
            <person name="Glavina Del Rio T."/>
            <person name="Dalin E."/>
            <person name="Tice H."/>
            <person name="Pitluck S."/>
            <person name="Richardson P."/>
            <person name="Bruce D."/>
            <person name="Goodwin L."/>
            <person name="Han C."/>
            <person name="Detter J.C."/>
            <person name="Schmutz J."/>
            <person name="Brettin T."/>
            <person name="Land M."/>
            <person name="Hauser L."/>
            <person name="Kyrpides N.C."/>
            <person name="Ivanova N."/>
            <person name="Goeker M."/>
            <person name="Woyke T."/>
            <person name="Klenk H.P."/>
            <person name="Bryant D.A."/>
        </authorList>
    </citation>
    <scope>NUCLEOTIDE SEQUENCE [LARGE SCALE GENOMIC DNA]</scope>
    <source>
        <strain>ATCC 23779 / DSM 785 / 114-95</strain>
    </source>
</reference>